<keyword id="KW-0067">ATP-binding</keyword>
<keyword id="KW-0414">Isoprene biosynthesis</keyword>
<keyword id="KW-0418">Kinase</keyword>
<keyword id="KW-0547">Nucleotide-binding</keyword>
<keyword id="KW-0808">Transferase</keyword>
<accession>B2UER7</accession>
<organism>
    <name type="scientific">Ralstonia pickettii (strain 12J)</name>
    <dbReference type="NCBI Taxonomy" id="402626"/>
    <lineage>
        <taxon>Bacteria</taxon>
        <taxon>Pseudomonadati</taxon>
        <taxon>Pseudomonadota</taxon>
        <taxon>Betaproteobacteria</taxon>
        <taxon>Burkholderiales</taxon>
        <taxon>Burkholderiaceae</taxon>
        <taxon>Ralstonia</taxon>
    </lineage>
</organism>
<sequence>MSSAPVELRDCPAPAKLNLFLHVVGRRPDGYHLLQTVFQLIDWSDTLHFARRPDRRLVRTTDILGVPADDDLVIRAARLLQAETGCTYGVDIAIEKRLPMGGGLGGGSSDAATTLLALNRLWGLDLPRAQLMKIGLKLGADVPFFVFGQNAFAEGIGEKLTPITLPPAAFVVIHPRVHVPTPAIFSDEGLTRDTPLTIITDFPDQQIVFAYGRNDLQAVAERKYGEIARALVWLRQFSPLARMTGSGACVFAPFDNVEHAQAVADQVPSEWEGRCAAGLTHHPLARFAV</sequence>
<reference key="1">
    <citation type="submission" date="2008-05" db="EMBL/GenBank/DDBJ databases">
        <title>Complete sequence of chromosome 1 of Ralstonia pickettii 12J.</title>
        <authorList>
            <person name="Lucas S."/>
            <person name="Copeland A."/>
            <person name="Lapidus A."/>
            <person name="Glavina del Rio T."/>
            <person name="Dalin E."/>
            <person name="Tice H."/>
            <person name="Bruce D."/>
            <person name="Goodwin L."/>
            <person name="Pitluck S."/>
            <person name="Meincke L."/>
            <person name="Brettin T."/>
            <person name="Detter J.C."/>
            <person name="Han C."/>
            <person name="Kuske C.R."/>
            <person name="Schmutz J."/>
            <person name="Larimer F."/>
            <person name="Land M."/>
            <person name="Hauser L."/>
            <person name="Kyrpides N."/>
            <person name="Mikhailova N."/>
            <person name="Marsh T."/>
            <person name="Richardson P."/>
        </authorList>
    </citation>
    <scope>NUCLEOTIDE SEQUENCE [LARGE SCALE GENOMIC DNA]</scope>
    <source>
        <strain>12J</strain>
    </source>
</reference>
<evidence type="ECO:0000255" key="1">
    <source>
        <dbReference type="HAMAP-Rule" id="MF_00061"/>
    </source>
</evidence>
<proteinExistence type="inferred from homology"/>
<name>ISPE_RALPJ</name>
<dbReference type="EC" id="2.7.1.148" evidence="1"/>
<dbReference type="EMBL" id="CP001068">
    <property type="protein sequence ID" value="ACD25413.1"/>
    <property type="molecule type" value="Genomic_DNA"/>
</dbReference>
<dbReference type="SMR" id="B2UER7"/>
<dbReference type="STRING" id="402626.Rpic_0251"/>
<dbReference type="KEGG" id="rpi:Rpic_0251"/>
<dbReference type="eggNOG" id="COG1947">
    <property type="taxonomic scope" value="Bacteria"/>
</dbReference>
<dbReference type="HOGENOM" id="CLU_053057_3_0_4"/>
<dbReference type="UniPathway" id="UPA00056">
    <property type="reaction ID" value="UER00094"/>
</dbReference>
<dbReference type="GO" id="GO:0050515">
    <property type="term" value="F:4-(cytidine 5'-diphospho)-2-C-methyl-D-erythritol kinase activity"/>
    <property type="evidence" value="ECO:0007669"/>
    <property type="project" value="UniProtKB-UniRule"/>
</dbReference>
<dbReference type="GO" id="GO:0005524">
    <property type="term" value="F:ATP binding"/>
    <property type="evidence" value="ECO:0007669"/>
    <property type="project" value="UniProtKB-UniRule"/>
</dbReference>
<dbReference type="GO" id="GO:0019288">
    <property type="term" value="P:isopentenyl diphosphate biosynthetic process, methylerythritol 4-phosphate pathway"/>
    <property type="evidence" value="ECO:0007669"/>
    <property type="project" value="UniProtKB-UniRule"/>
</dbReference>
<dbReference type="GO" id="GO:0016114">
    <property type="term" value="P:terpenoid biosynthetic process"/>
    <property type="evidence" value="ECO:0007669"/>
    <property type="project" value="InterPro"/>
</dbReference>
<dbReference type="Gene3D" id="3.30.230.10">
    <property type="match status" value="1"/>
</dbReference>
<dbReference type="Gene3D" id="3.30.70.890">
    <property type="entry name" value="GHMP kinase, C-terminal domain"/>
    <property type="match status" value="1"/>
</dbReference>
<dbReference type="HAMAP" id="MF_00061">
    <property type="entry name" value="IspE"/>
    <property type="match status" value="1"/>
</dbReference>
<dbReference type="InterPro" id="IPR013750">
    <property type="entry name" value="GHMP_kinase_C_dom"/>
</dbReference>
<dbReference type="InterPro" id="IPR036554">
    <property type="entry name" value="GHMP_kinase_C_sf"/>
</dbReference>
<dbReference type="InterPro" id="IPR006204">
    <property type="entry name" value="GHMP_kinase_N_dom"/>
</dbReference>
<dbReference type="InterPro" id="IPR004424">
    <property type="entry name" value="IspE"/>
</dbReference>
<dbReference type="InterPro" id="IPR020568">
    <property type="entry name" value="Ribosomal_Su5_D2-typ_SF"/>
</dbReference>
<dbReference type="InterPro" id="IPR014721">
    <property type="entry name" value="Ribsml_uS5_D2-typ_fold_subgr"/>
</dbReference>
<dbReference type="NCBIfam" id="TIGR00154">
    <property type="entry name" value="ispE"/>
    <property type="match status" value="1"/>
</dbReference>
<dbReference type="NCBIfam" id="NF011202">
    <property type="entry name" value="PRK14608.1"/>
    <property type="match status" value="1"/>
</dbReference>
<dbReference type="PANTHER" id="PTHR43527">
    <property type="entry name" value="4-DIPHOSPHOCYTIDYL-2-C-METHYL-D-ERYTHRITOL KINASE, CHLOROPLASTIC"/>
    <property type="match status" value="1"/>
</dbReference>
<dbReference type="PANTHER" id="PTHR43527:SF2">
    <property type="entry name" value="4-DIPHOSPHOCYTIDYL-2-C-METHYL-D-ERYTHRITOL KINASE, CHLOROPLASTIC"/>
    <property type="match status" value="1"/>
</dbReference>
<dbReference type="Pfam" id="PF08544">
    <property type="entry name" value="GHMP_kinases_C"/>
    <property type="match status" value="1"/>
</dbReference>
<dbReference type="Pfam" id="PF00288">
    <property type="entry name" value="GHMP_kinases_N"/>
    <property type="match status" value="1"/>
</dbReference>
<dbReference type="PIRSF" id="PIRSF010376">
    <property type="entry name" value="IspE"/>
    <property type="match status" value="1"/>
</dbReference>
<dbReference type="SUPFAM" id="SSF55060">
    <property type="entry name" value="GHMP Kinase, C-terminal domain"/>
    <property type="match status" value="1"/>
</dbReference>
<dbReference type="SUPFAM" id="SSF54211">
    <property type="entry name" value="Ribosomal protein S5 domain 2-like"/>
    <property type="match status" value="1"/>
</dbReference>
<feature type="chain" id="PRO_1000092107" description="4-diphosphocytidyl-2-C-methyl-D-erythritol kinase">
    <location>
        <begin position="1"/>
        <end position="289"/>
    </location>
</feature>
<feature type="active site" evidence="1">
    <location>
        <position position="16"/>
    </location>
</feature>
<feature type="active site" evidence="1">
    <location>
        <position position="141"/>
    </location>
</feature>
<feature type="binding site" evidence="1">
    <location>
        <begin position="99"/>
        <end position="109"/>
    </location>
    <ligand>
        <name>ATP</name>
        <dbReference type="ChEBI" id="CHEBI:30616"/>
    </ligand>
</feature>
<gene>
    <name evidence="1" type="primary">ispE</name>
    <name type="ordered locus">Rpic_0251</name>
</gene>
<comment type="function">
    <text evidence="1">Catalyzes the phosphorylation of the position 2 hydroxy group of 4-diphosphocytidyl-2C-methyl-D-erythritol.</text>
</comment>
<comment type="catalytic activity">
    <reaction evidence="1">
        <text>4-CDP-2-C-methyl-D-erythritol + ATP = 4-CDP-2-C-methyl-D-erythritol 2-phosphate + ADP + H(+)</text>
        <dbReference type="Rhea" id="RHEA:18437"/>
        <dbReference type="ChEBI" id="CHEBI:15378"/>
        <dbReference type="ChEBI" id="CHEBI:30616"/>
        <dbReference type="ChEBI" id="CHEBI:57823"/>
        <dbReference type="ChEBI" id="CHEBI:57919"/>
        <dbReference type="ChEBI" id="CHEBI:456216"/>
        <dbReference type="EC" id="2.7.1.148"/>
    </reaction>
</comment>
<comment type="pathway">
    <text evidence="1">Isoprenoid biosynthesis; isopentenyl diphosphate biosynthesis via DXP pathway; isopentenyl diphosphate from 1-deoxy-D-xylulose 5-phosphate: step 3/6.</text>
</comment>
<comment type="similarity">
    <text evidence="1">Belongs to the GHMP kinase family. IspE subfamily.</text>
</comment>
<protein>
    <recommendedName>
        <fullName evidence="1">4-diphosphocytidyl-2-C-methyl-D-erythritol kinase</fullName>
        <shortName evidence="1">CMK</shortName>
        <ecNumber evidence="1">2.7.1.148</ecNumber>
    </recommendedName>
    <alternativeName>
        <fullName evidence="1">4-(cytidine-5'-diphospho)-2-C-methyl-D-erythritol kinase</fullName>
    </alternativeName>
</protein>